<keyword id="KW-0010">Activator</keyword>
<keyword id="KW-1005">Bacterial flagellum biogenesis</keyword>
<keyword id="KW-0963">Cytoplasm</keyword>
<keyword id="KW-1015">Disulfide bond</keyword>
<keyword id="KW-0238">DNA-binding</keyword>
<keyword id="KW-0804">Transcription</keyword>
<keyword id="KW-0805">Transcription regulation</keyword>
<sequence>MSTSEILKHIYDINLSYLLLAQRLIHDDKASAMFRLGIDADMAETLVQLTLPQMVKLAETNQLVCQFRFEDHQTIQRLTQESRVDDLQQIHTGILLSSHLLQQLSADGNDSGKRG</sequence>
<evidence type="ECO:0000255" key="1">
    <source>
        <dbReference type="HAMAP-Rule" id="MF_00725"/>
    </source>
</evidence>
<dbReference type="EMBL" id="CP001600">
    <property type="protein sequence ID" value="ACR68638.1"/>
    <property type="molecule type" value="Genomic_DNA"/>
</dbReference>
<dbReference type="RefSeq" id="WP_015870801.1">
    <property type="nucleotide sequence ID" value="NZ_CP169062.1"/>
</dbReference>
<dbReference type="SMR" id="C5BDU0"/>
<dbReference type="STRING" id="67780.B6E78_00545"/>
<dbReference type="GeneID" id="69538450"/>
<dbReference type="KEGG" id="eic:NT01EI_1452"/>
<dbReference type="PATRIC" id="fig|634503.3.peg.1304"/>
<dbReference type="HOGENOM" id="CLU_144160_0_0_6"/>
<dbReference type="OrthoDB" id="5298036at2"/>
<dbReference type="Proteomes" id="UP000001485">
    <property type="component" value="Chromosome"/>
</dbReference>
<dbReference type="GO" id="GO:0005737">
    <property type="term" value="C:cytoplasm"/>
    <property type="evidence" value="ECO:0007669"/>
    <property type="project" value="UniProtKB-SubCell"/>
</dbReference>
<dbReference type="GO" id="GO:0003677">
    <property type="term" value="F:DNA binding"/>
    <property type="evidence" value="ECO:0007669"/>
    <property type="project" value="UniProtKB-UniRule"/>
</dbReference>
<dbReference type="GO" id="GO:0044780">
    <property type="term" value="P:bacterial-type flagellum assembly"/>
    <property type="evidence" value="ECO:0007669"/>
    <property type="project" value="InterPro"/>
</dbReference>
<dbReference type="GO" id="GO:0045893">
    <property type="term" value="P:positive regulation of DNA-templated transcription"/>
    <property type="evidence" value="ECO:0007669"/>
    <property type="project" value="InterPro"/>
</dbReference>
<dbReference type="GO" id="GO:1902208">
    <property type="term" value="P:regulation of bacterial-type flagellum assembly"/>
    <property type="evidence" value="ECO:0007669"/>
    <property type="project" value="UniProtKB-UniRule"/>
</dbReference>
<dbReference type="Gene3D" id="1.10.4000.10">
    <property type="entry name" value="Flagellar transcriptional activator FlhD"/>
    <property type="match status" value="1"/>
</dbReference>
<dbReference type="HAMAP" id="MF_00725">
    <property type="entry name" value="FlhD"/>
    <property type="match status" value="1"/>
</dbReference>
<dbReference type="InterPro" id="IPR023559">
    <property type="entry name" value="Flagellar_FlhD"/>
</dbReference>
<dbReference type="InterPro" id="IPR036194">
    <property type="entry name" value="FlhD_sf"/>
</dbReference>
<dbReference type="NCBIfam" id="NF002783">
    <property type="entry name" value="PRK02909.1-1"/>
    <property type="match status" value="1"/>
</dbReference>
<dbReference type="Pfam" id="PF05247">
    <property type="entry name" value="FlhD"/>
    <property type="match status" value="1"/>
</dbReference>
<dbReference type="SUPFAM" id="SSF63592">
    <property type="entry name" value="Flagellar transcriptional activator FlhD"/>
    <property type="match status" value="1"/>
</dbReference>
<gene>
    <name evidence="1" type="primary">flhD</name>
    <name type="ordered locus">NT01EI_1452</name>
</gene>
<comment type="function">
    <text evidence="1">Functions in complex with FlhC as a master transcriptional regulator that regulates transcription of several flagellar and non-flagellar operons by binding to their promoter region. Activates expression of class 2 flagellar genes, including fliA, which is a flagellum-specific sigma factor that turns on the class 3 genes. Also regulates genes whose products function in a variety of physiological pathways.</text>
</comment>
<comment type="subunit">
    <text evidence="1">Homodimer; disulfide-linked. Forms a heterohexamer composed of two FlhC and four FlhD subunits. Each FlhC binds a FlhD dimer, forming a heterotrimer, and a hexamer assembles by dimerization of two heterotrimers.</text>
</comment>
<comment type="subcellular location">
    <subcellularLocation>
        <location evidence="1">Cytoplasm</location>
    </subcellularLocation>
</comment>
<comment type="domain">
    <text evidence="1">The C-terminal region contains a putative helix-turn-helix (HTH) motif, suggesting that this region may bind DNA.</text>
</comment>
<comment type="similarity">
    <text evidence="1">Belongs to the FlhD family.</text>
</comment>
<proteinExistence type="inferred from homology"/>
<reference key="1">
    <citation type="submission" date="2009-03" db="EMBL/GenBank/DDBJ databases">
        <title>Complete genome sequence of Edwardsiella ictaluri 93-146.</title>
        <authorList>
            <person name="Williams M.L."/>
            <person name="Gillaspy A.F."/>
            <person name="Dyer D.W."/>
            <person name="Thune R.L."/>
            <person name="Waldbieser G.C."/>
            <person name="Schuster S.C."/>
            <person name="Gipson J."/>
            <person name="Zaitshik J."/>
            <person name="Landry C."/>
            <person name="Lawrence M.L."/>
        </authorList>
    </citation>
    <scope>NUCLEOTIDE SEQUENCE [LARGE SCALE GENOMIC DNA]</scope>
    <source>
        <strain>93-146</strain>
    </source>
</reference>
<accession>C5BDU0</accession>
<protein>
    <recommendedName>
        <fullName evidence="1">Flagellar transcriptional regulator FlhD</fullName>
    </recommendedName>
</protein>
<name>FLHD_EDWI9</name>
<organism>
    <name type="scientific">Edwardsiella ictaluri (strain 93-146)</name>
    <dbReference type="NCBI Taxonomy" id="634503"/>
    <lineage>
        <taxon>Bacteria</taxon>
        <taxon>Pseudomonadati</taxon>
        <taxon>Pseudomonadota</taxon>
        <taxon>Gammaproteobacteria</taxon>
        <taxon>Enterobacterales</taxon>
        <taxon>Hafniaceae</taxon>
        <taxon>Edwardsiella</taxon>
    </lineage>
</organism>
<feature type="chain" id="PRO_1000212727" description="Flagellar transcriptional regulator FlhD">
    <location>
        <begin position="1"/>
        <end position="115"/>
    </location>
</feature>
<feature type="disulfide bond" description="Interchain" evidence="1">
    <location>
        <position position="65"/>
    </location>
</feature>